<proteinExistence type="inferred from homology"/>
<keyword id="KW-0067">ATP-binding</keyword>
<keyword id="KW-0227">DNA damage</keyword>
<keyword id="KW-0234">DNA repair</keyword>
<keyword id="KW-0238">DNA-binding</keyword>
<keyword id="KW-0460">Magnesium</keyword>
<keyword id="KW-0547">Nucleotide-binding</keyword>
<keyword id="KW-0548">Nucleotidyltransferase</keyword>
<keyword id="KW-1185">Reference proteome</keyword>
<keyword id="KW-0808">Transferase</keyword>
<protein>
    <recommendedName>
        <fullName evidence="1">DNA integrity scanning protein DisA</fullName>
    </recommendedName>
    <alternativeName>
        <fullName evidence="1">Cyclic di-AMP synthase</fullName>
        <shortName evidence="1">c-di-AMP synthase</shortName>
    </alternativeName>
    <alternativeName>
        <fullName evidence="1">Diadenylate cyclase</fullName>
        <ecNumber evidence="1">2.7.7.85</ecNumber>
    </alternativeName>
</protein>
<gene>
    <name evidence="1" type="primary">disA</name>
    <name type="ordered locus">Acel_0229</name>
</gene>
<comment type="function">
    <text evidence="1">Participates in a DNA-damage check-point. DisA forms globular foci that rapidly scan along the chromosomes searching for lesions.</text>
</comment>
<comment type="function">
    <text evidence="1">Also has diadenylate cyclase activity, catalyzing the condensation of 2 ATP molecules into cyclic di-AMP (c-di-AMP). c-di-AMP likely acts as a signaling molecule that may couple DNA integrity with a cellular process.</text>
</comment>
<comment type="catalytic activity">
    <reaction evidence="1">
        <text>2 ATP = 3',3'-c-di-AMP + 2 diphosphate</text>
        <dbReference type="Rhea" id="RHEA:35655"/>
        <dbReference type="ChEBI" id="CHEBI:30616"/>
        <dbReference type="ChEBI" id="CHEBI:33019"/>
        <dbReference type="ChEBI" id="CHEBI:71500"/>
        <dbReference type="EC" id="2.7.7.85"/>
    </reaction>
</comment>
<comment type="cofactor">
    <cofactor evidence="1">
        <name>Mg(2+)</name>
        <dbReference type="ChEBI" id="CHEBI:18420"/>
    </cofactor>
</comment>
<comment type="subunit">
    <text evidence="1">Homooctamer.</text>
</comment>
<comment type="similarity">
    <text evidence="1">Belongs to the DisA family.</text>
</comment>
<accession>A0LRE3</accession>
<name>DISA_ACIC1</name>
<organism>
    <name type="scientific">Acidothermus cellulolyticus (strain ATCC 43068 / DSM 8971 / 11B)</name>
    <dbReference type="NCBI Taxonomy" id="351607"/>
    <lineage>
        <taxon>Bacteria</taxon>
        <taxon>Bacillati</taxon>
        <taxon>Actinomycetota</taxon>
        <taxon>Actinomycetes</taxon>
        <taxon>Acidothermales</taxon>
        <taxon>Acidothermaceae</taxon>
        <taxon>Acidothermus</taxon>
    </lineage>
</organism>
<reference key="1">
    <citation type="journal article" date="2009" name="Genome Res.">
        <title>Complete genome of the cellulolytic thermophile Acidothermus cellulolyticus 11B provides insights into its ecophysiological and evolutionary adaptations.</title>
        <authorList>
            <person name="Barabote R.D."/>
            <person name="Xie G."/>
            <person name="Leu D.H."/>
            <person name="Normand P."/>
            <person name="Necsulea A."/>
            <person name="Daubin V."/>
            <person name="Medigue C."/>
            <person name="Adney W.S."/>
            <person name="Xu X.C."/>
            <person name="Lapidus A."/>
            <person name="Parales R.E."/>
            <person name="Detter C."/>
            <person name="Pujic P."/>
            <person name="Bruce D."/>
            <person name="Lavire C."/>
            <person name="Challacombe J.F."/>
            <person name="Brettin T.S."/>
            <person name="Berry A.M."/>
        </authorList>
    </citation>
    <scope>NUCLEOTIDE SEQUENCE [LARGE SCALE GENOMIC DNA]</scope>
    <source>
        <strain>ATCC 43068 / DSM 8971 / 11B</strain>
    </source>
</reference>
<dbReference type="EC" id="2.7.7.85" evidence="1"/>
<dbReference type="EMBL" id="CP000481">
    <property type="protein sequence ID" value="ABK52003.1"/>
    <property type="molecule type" value="Genomic_DNA"/>
</dbReference>
<dbReference type="RefSeq" id="WP_011719067.1">
    <property type="nucleotide sequence ID" value="NC_008578.1"/>
</dbReference>
<dbReference type="SMR" id="A0LRE3"/>
<dbReference type="FunCoup" id="A0LRE3">
    <property type="interactions" value="2"/>
</dbReference>
<dbReference type="STRING" id="351607.Acel_0229"/>
<dbReference type="KEGG" id="ace:Acel_0229"/>
<dbReference type="eggNOG" id="COG1623">
    <property type="taxonomic scope" value="Bacteria"/>
</dbReference>
<dbReference type="HOGENOM" id="CLU_787128_0_0_11"/>
<dbReference type="InParanoid" id="A0LRE3"/>
<dbReference type="OrthoDB" id="41841at2"/>
<dbReference type="Proteomes" id="UP000008221">
    <property type="component" value="Chromosome"/>
</dbReference>
<dbReference type="GO" id="GO:0004016">
    <property type="term" value="F:adenylate cyclase activity"/>
    <property type="evidence" value="ECO:0007669"/>
    <property type="project" value="TreeGrafter"/>
</dbReference>
<dbReference type="GO" id="GO:0005524">
    <property type="term" value="F:ATP binding"/>
    <property type="evidence" value="ECO:0007669"/>
    <property type="project" value="UniProtKB-UniRule"/>
</dbReference>
<dbReference type="GO" id="GO:0106408">
    <property type="term" value="F:diadenylate cyclase activity"/>
    <property type="evidence" value="ECO:0007669"/>
    <property type="project" value="UniProtKB-EC"/>
</dbReference>
<dbReference type="GO" id="GO:0003677">
    <property type="term" value="F:DNA binding"/>
    <property type="evidence" value="ECO:0007669"/>
    <property type="project" value="UniProtKB-UniRule"/>
</dbReference>
<dbReference type="GO" id="GO:0006281">
    <property type="term" value="P:DNA repair"/>
    <property type="evidence" value="ECO:0007669"/>
    <property type="project" value="UniProtKB-UniRule"/>
</dbReference>
<dbReference type="FunFam" id="1.10.150.20:FF:000016">
    <property type="entry name" value="DNA integrity scanning protein DisA"/>
    <property type="match status" value="1"/>
</dbReference>
<dbReference type="FunFam" id="1.20.1260.110:FF:000002">
    <property type="entry name" value="DNA integrity scanning protein DisA"/>
    <property type="match status" value="1"/>
</dbReference>
<dbReference type="FunFam" id="3.40.1700.10:FF:000001">
    <property type="entry name" value="DNA integrity scanning protein DisA"/>
    <property type="match status" value="1"/>
</dbReference>
<dbReference type="Gene3D" id="1.10.150.20">
    <property type="entry name" value="5' to 3' exonuclease, C-terminal subdomain"/>
    <property type="match status" value="1"/>
</dbReference>
<dbReference type="Gene3D" id="1.20.1260.110">
    <property type="entry name" value="DNA integrity scanning linker region"/>
    <property type="match status" value="1"/>
</dbReference>
<dbReference type="Gene3D" id="3.40.1700.10">
    <property type="entry name" value="DNA integrity scanning protein, DisA, N-terminal domain"/>
    <property type="match status" value="1"/>
</dbReference>
<dbReference type="HAMAP" id="MF_01438">
    <property type="entry name" value="DisA"/>
    <property type="match status" value="1"/>
</dbReference>
<dbReference type="InterPro" id="IPR050338">
    <property type="entry name" value="DisA"/>
</dbReference>
<dbReference type="InterPro" id="IPR038331">
    <property type="entry name" value="DisA_sf"/>
</dbReference>
<dbReference type="InterPro" id="IPR036888">
    <property type="entry name" value="DNA_integrity_DisA_N_sf"/>
</dbReference>
<dbReference type="InterPro" id="IPR018906">
    <property type="entry name" value="DNA_integrity_scan_DisA_link"/>
</dbReference>
<dbReference type="InterPro" id="IPR003390">
    <property type="entry name" value="DNA_integrity_scan_DisA_N"/>
</dbReference>
<dbReference type="InterPro" id="IPR023763">
    <property type="entry name" value="DNA_integrity_scanning_protein"/>
</dbReference>
<dbReference type="InterPro" id="IPR010994">
    <property type="entry name" value="RuvA_2-like"/>
</dbReference>
<dbReference type="NCBIfam" id="NF010009">
    <property type="entry name" value="PRK13482.1"/>
    <property type="match status" value="1"/>
</dbReference>
<dbReference type="PANTHER" id="PTHR34185">
    <property type="entry name" value="DIADENYLATE CYCLASE"/>
    <property type="match status" value="1"/>
</dbReference>
<dbReference type="PANTHER" id="PTHR34185:SF3">
    <property type="entry name" value="DNA INTEGRITY SCANNING PROTEIN DISA"/>
    <property type="match status" value="1"/>
</dbReference>
<dbReference type="Pfam" id="PF02457">
    <property type="entry name" value="DAC"/>
    <property type="match status" value="1"/>
</dbReference>
<dbReference type="Pfam" id="PF10635">
    <property type="entry name" value="DisA-linker"/>
    <property type="match status" value="1"/>
</dbReference>
<dbReference type="Pfam" id="PF14520">
    <property type="entry name" value="HHH_5"/>
    <property type="match status" value="1"/>
</dbReference>
<dbReference type="SUPFAM" id="SSF47781">
    <property type="entry name" value="RuvA domain 2-like"/>
    <property type="match status" value="1"/>
</dbReference>
<dbReference type="SUPFAM" id="SSF143597">
    <property type="entry name" value="YojJ-like"/>
    <property type="match status" value="1"/>
</dbReference>
<dbReference type="PROSITE" id="PS51794">
    <property type="entry name" value="DAC"/>
    <property type="match status" value="1"/>
</dbReference>
<sequence length="368" mass="40180">MAANDRPDRSDRGADERLRATLAAIAPGTQMRDALERILRGNTGALIVLGYDKTVESICSGGFNLDVELSAPLMRELAKMDGAIILDEKATRIIKANVHLQPDPSIPTNESGTRHRSAERTARQTGFPVISVSQSMRIIALYVDGRRHVLDEPSAILSRANQALATLERYKLRLDEVSGTLSALEIEDLVTVRDAAVVAQRLEMVRRIADEIQGYVVELGTDGRLLSLQLDELLAGVEPERDLIVRDYLPAAAGKRGRSVDDVLRDLDALTPEELLDLGTVARVIGCGGTENLDNPVSPRGYRLLAKIPRLPCAVIERLVEHFGTLQKLLAASVDDLQAVEGVGESRARSVREGLSRLAESSILERYV</sequence>
<evidence type="ECO:0000255" key="1">
    <source>
        <dbReference type="HAMAP-Rule" id="MF_01438"/>
    </source>
</evidence>
<evidence type="ECO:0000255" key="2">
    <source>
        <dbReference type="PROSITE-ProRule" id="PRU01130"/>
    </source>
</evidence>
<evidence type="ECO:0000256" key="3">
    <source>
        <dbReference type="SAM" id="MobiDB-lite"/>
    </source>
</evidence>
<feature type="chain" id="PRO_1000145851" description="DNA integrity scanning protein DisA">
    <location>
        <begin position="1"/>
        <end position="368"/>
    </location>
</feature>
<feature type="domain" description="DAC" evidence="2">
    <location>
        <begin position="15"/>
        <end position="153"/>
    </location>
</feature>
<feature type="region of interest" description="Disordered" evidence="3">
    <location>
        <begin position="101"/>
        <end position="121"/>
    </location>
</feature>
<feature type="compositionally biased region" description="Basic and acidic residues" evidence="3">
    <location>
        <begin position="112"/>
        <end position="121"/>
    </location>
</feature>
<feature type="binding site" evidence="1">
    <location>
        <position position="82"/>
    </location>
    <ligand>
        <name>ATP</name>
        <dbReference type="ChEBI" id="CHEBI:30616"/>
    </ligand>
</feature>
<feature type="binding site" evidence="1">
    <location>
        <position position="100"/>
    </location>
    <ligand>
        <name>ATP</name>
        <dbReference type="ChEBI" id="CHEBI:30616"/>
    </ligand>
</feature>
<feature type="binding site" evidence="1">
    <location>
        <begin position="113"/>
        <end position="117"/>
    </location>
    <ligand>
        <name>ATP</name>
        <dbReference type="ChEBI" id="CHEBI:30616"/>
    </ligand>
</feature>